<proteinExistence type="inferred from homology"/>
<gene>
    <name evidence="1" type="primary">dapD</name>
    <name type="ordered locus">YPN_2960</name>
    <name type="ORF">YP516_3350</name>
</gene>
<keyword id="KW-0012">Acyltransferase</keyword>
<keyword id="KW-0028">Amino-acid biosynthesis</keyword>
<keyword id="KW-0963">Cytoplasm</keyword>
<keyword id="KW-0220">Diaminopimelate biosynthesis</keyword>
<keyword id="KW-0457">Lysine biosynthesis</keyword>
<keyword id="KW-0677">Repeat</keyword>
<keyword id="KW-0808">Transferase</keyword>
<name>DAPD_YERPN</name>
<organism>
    <name type="scientific">Yersinia pestis bv. Antiqua (strain Nepal516)</name>
    <dbReference type="NCBI Taxonomy" id="377628"/>
    <lineage>
        <taxon>Bacteria</taxon>
        <taxon>Pseudomonadati</taxon>
        <taxon>Pseudomonadota</taxon>
        <taxon>Gammaproteobacteria</taxon>
        <taxon>Enterobacterales</taxon>
        <taxon>Yersiniaceae</taxon>
        <taxon>Yersinia</taxon>
    </lineage>
</organism>
<reference key="1">
    <citation type="journal article" date="2006" name="J. Bacteriol.">
        <title>Complete genome sequence of Yersinia pestis strains Antiqua and Nepal516: evidence of gene reduction in an emerging pathogen.</title>
        <authorList>
            <person name="Chain P.S.G."/>
            <person name="Hu P."/>
            <person name="Malfatti S.A."/>
            <person name="Radnedge L."/>
            <person name="Larimer F."/>
            <person name="Vergez L.M."/>
            <person name="Worsham P."/>
            <person name="Chu M.C."/>
            <person name="Andersen G.L."/>
        </authorList>
    </citation>
    <scope>NUCLEOTIDE SEQUENCE [LARGE SCALE GENOMIC DNA]</scope>
    <source>
        <strain>Nepal516</strain>
    </source>
</reference>
<reference key="2">
    <citation type="submission" date="2009-04" db="EMBL/GenBank/DDBJ databases">
        <title>Yersinia pestis Nepal516A whole genome shotgun sequencing project.</title>
        <authorList>
            <person name="Plunkett G. III"/>
            <person name="Anderson B.D."/>
            <person name="Baumler D.J."/>
            <person name="Burland V."/>
            <person name="Cabot E.L."/>
            <person name="Glasner J.D."/>
            <person name="Mau B."/>
            <person name="Neeno-Eckwall E."/>
            <person name="Perna N.T."/>
            <person name="Munk A.C."/>
            <person name="Tapia R."/>
            <person name="Green L.D."/>
            <person name="Rogers Y.C."/>
            <person name="Detter J.C."/>
            <person name="Bruce D.C."/>
            <person name="Brettin T.S."/>
        </authorList>
    </citation>
    <scope>NUCLEOTIDE SEQUENCE [LARGE SCALE GENOMIC DNA]</scope>
    <source>
        <strain>Nepal516</strain>
    </source>
</reference>
<accession>Q1CFE3</accession>
<accession>C4GWY5</accession>
<comment type="catalytic activity">
    <reaction evidence="1">
        <text>(S)-2,3,4,5-tetrahydrodipicolinate + succinyl-CoA + H2O = (S)-2-succinylamino-6-oxoheptanedioate + CoA</text>
        <dbReference type="Rhea" id="RHEA:17325"/>
        <dbReference type="ChEBI" id="CHEBI:15377"/>
        <dbReference type="ChEBI" id="CHEBI:15685"/>
        <dbReference type="ChEBI" id="CHEBI:16845"/>
        <dbReference type="ChEBI" id="CHEBI:57287"/>
        <dbReference type="ChEBI" id="CHEBI:57292"/>
        <dbReference type="EC" id="2.3.1.117"/>
    </reaction>
</comment>
<comment type="pathway">
    <text evidence="1">Amino-acid biosynthesis; L-lysine biosynthesis via DAP pathway; LL-2,6-diaminopimelate from (S)-tetrahydrodipicolinate (succinylase route): step 1/3.</text>
</comment>
<comment type="subunit">
    <text evidence="1">Homotrimer.</text>
</comment>
<comment type="subcellular location">
    <subcellularLocation>
        <location evidence="1">Cytoplasm</location>
    </subcellularLocation>
</comment>
<comment type="similarity">
    <text evidence="1">Belongs to the transferase hexapeptide repeat family.</text>
</comment>
<dbReference type="EC" id="2.3.1.117" evidence="1"/>
<dbReference type="EMBL" id="CP000305">
    <property type="protein sequence ID" value="ABG19287.1"/>
    <property type="molecule type" value="Genomic_DNA"/>
</dbReference>
<dbReference type="EMBL" id="ACNQ01000017">
    <property type="protein sequence ID" value="EEO75435.1"/>
    <property type="molecule type" value="Genomic_DNA"/>
</dbReference>
<dbReference type="RefSeq" id="WP_002212128.1">
    <property type="nucleotide sequence ID" value="NZ_ACNQ01000017.1"/>
</dbReference>
<dbReference type="SMR" id="Q1CFE3"/>
<dbReference type="GeneID" id="96662373"/>
<dbReference type="KEGG" id="ypn:YPN_2960"/>
<dbReference type="HOGENOM" id="CLU_050859_0_1_6"/>
<dbReference type="UniPathway" id="UPA00034">
    <property type="reaction ID" value="UER00019"/>
</dbReference>
<dbReference type="Proteomes" id="UP000008936">
    <property type="component" value="Chromosome"/>
</dbReference>
<dbReference type="GO" id="GO:0005737">
    <property type="term" value="C:cytoplasm"/>
    <property type="evidence" value="ECO:0007669"/>
    <property type="project" value="UniProtKB-SubCell"/>
</dbReference>
<dbReference type="GO" id="GO:0008666">
    <property type="term" value="F:2,3,4,5-tetrahydropyridine-2,6-dicarboxylate N-succinyltransferase activity"/>
    <property type="evidence" value="ECO:0007669"/>
    <property type="project" value="UniProtKB-UniRule"/>
</dbReference>
<dbReference type="GO" id="GO:0016779">
    <property type="term" value="F:nucleotidyltransferase activity"/>
    <property type="evidence" value="ECO:0007669"/>
    <property type="project" value="TreeGrafter"/>
</dbReference>
<dbReference type="GO" id="GO:0019877">
    <property type="term" value="P:diaminopimelate biosynthetic process"/>
    <property type="evidence" value="ECO:0007669"/>
    <property type="project" value="UniProtKB-UniRule"/>
</dbReference>
<dbReference type="GO" id="GO:0009089">
    <property type="term" value="P:lysine biosynthetic process via diaminopimelate"/>
    <property type="evidence" value="ECO:0007669"/>
    <property type="project" value="UniProtKB-UniRule"/>
</dbReference>
<dbReference type="CDD" id="cd03350">
    <property type="entry name" value="LbH_THP_succinylT"/>
    <property type="match status" value="1"/>
</dbReference>
<dbReference type="FunFam" id="2.160.10.10:FF:000004">
    <property type="entry name" value="2,3,4,5-tetrahydropyridine-2,6-dicarboxylate N-succinyltransferase"/>
    <property type="match status" value="1"/>
</dbReference>
<dbReference type="Gene3D" id="2.160.10.10">
    <property type="entry name" value="Hexapeptide repeat proteins"/>
    <property type="match status" value="1"/>
</dbReference>
<dbReference type="Gene3D" id="1.10.166.10">
    <property type="entry name" value="Tetrahydrodipicolinate-N-succinyltransferase, N-terminal domain"/>
    <property type="match status" value="1"/>
</dbReference>
<dbReference type="HAMAP" id="MF_00811">
    <property type="entry name" value="DapD"/>
    <property type="match status" value="1"/>
</dbReference>
<dbReference type="InterPro" id="IPR005664">
    <property type="entry name" value="DapD_Trfase_Hexpep_rpt_fam"/>
</dbReference>
<dbReference type="InterPro" id="IPR001451">
    <property type="entry name" value="Hexapep"/>
</dbReference>
<dbReference type="InterPro" id="IPR018357">
    <property type="entry name" value="Hexapep_transf_CS"/>
</dbReference>
<dbReference type="InterPro" id="IPR023180">
    <property type="entry name" value="THP_succinylTrfase_dom1"/>
</dbReference>
<dbReference type="InterPro" id="IPR037133">
    <property type="entry name" value="THP_succinylTrfase_N_sf"/>
</dbReference>
<dbReference type="InterPro" id="IPR011004">
    <property type="entry name" value="Trimer_LpxA-like_sf"/>
</dbReference>
<dbReference type="NCBIfam" id="TIGR00965">
    <property type="entry name" value="dapD"/>
    <property type="match status" value="1"/>
</dbReference>
<dbReference type="NCBIfam" id="NF008808">
    <property type="entry name" value="PRK11830.1"/>
    <property type="match status" value="1"/>
</dbReference>
<dbReference type="PANTHER" id="PTHR19136:SF52">
    <property type="entry name" value="2,3,4,5-TETRAHYDROPYRIDINE-2,6-DICARBOXYLATE N-SUCCINYLTRANSFERASE"/>
    <property type="match status" value="1"/>
</dbReference>
<dbReference type="PANTHER" id="PTHR19136">
    <property type="entry name" value="MOLYBDENUM COFACTOR GUANYLYLTRANSFERASE"/>
    <property type="match status" value="1"/>
</dbReference>
<dbReference type="Pfam" id="PF14602">
    <property type="entry name" value="Hexapep_2"/>
    <property type="match status" value="1"/>
</dbReference>
<dbReference type="Pfam" id="PF14805">
    <property type="entry name" value="THDPS_N_2"/>
    <property type="match status" value="1"/>
</dbReference>
<dbReference type="SUPFAM" id="SSF51161">
    <property type="entry name" value="Trimeric LpxA-like enzymes"/>
    <property type="match status" value="1"/>
</dbReference>
<dbReference type="PROSITE" id="PS00101">
    <property type="entry name" value="HEXAPEP_TRANSFERASES"/>
    <property type="match status" value="1"/>
</dbReference>
<evidence type="ECO:0000255" key="1">
    <source>
        <dbReference type="HAMAP-Rule" id="MF_00811"/>
    </source>
</evidence>
<feature type="chain" id="PRO_1000047200" description="2,3,4,5-tetrahydropyridine-2,6-dicarboxylate N-succinyltransferase">
    <location>
        <begin position="1"/>
        <end position="274"/>
    </location>
</feature>
<feature type="binding site" evidence="1">
    <location>
        <position position="104"/>
    </location>
    <ligand>
        <name>substrate</name>
    </ligand>
</feature>
<feature type="binding site" evidence="1">
    <location>
        <position position="141"/>
    </location>
    <ligand>
        <name>substrate</name>
    </ligand>
</feature>
<protein>
    <recommendedName>
        <fullName evidence="1">2,3,4,5-tetrahydropyridine-2,6-dicarboxylate N-succinyltransferase</fullName>
        <ecNumber evidence="1">2.3.1.117</ecNumber>
    </recommendedName>
    <alternativeName>
        <fullName evidence="1">Tetrahydrodipicolinate N-succinyltransferase</fullName>
        <shortName evidence="1">THDP succinyltransferase</shortName>
        <shortName evidence="1">THP succinyltransferase</shortName>
        <shortName evidence="1">Tetrahydropicolinate succinylase</shortName>
    </alternativeName>
</protein>
<sequence>MQQLQNVIETAFERRADITPANVDTVTREAITHVIDLLDTGALRVAEKIDGQWVTHQWLKKAVLLSFRINDNQVMEGAETRYYDKVPMKFAGYDEARFQREGFRVVPPATVRKGAFIARNTVLMPSYVNIGAFVDEGTMVDTWATVGSCAQIGKNVHLSGGVGIGGVLEPLQANPTIIEDNCFVGARSEVVEGVIVEEGSVISMGVFIGQSTRIYDRETGEVHYGRVPAGSVVVSGNLPSKDGSYSLYCAVIVKKVDAKTRSKVGINELLRTID</sequence>